<keyword id="KW-0028">Amino-acid biosynthesis</keyword>
<keyword id="KW-0032">Aminotransferase</keyword>
<keyword id="KW-0963">Cytoplasm</keyword>
<keyword id="KW-0663">Pyridoxal phosphate</keyword>
<keyword id="KW-0718">Serine biosynthesis</keyword>
<keyword id="KW-0808">Transferase</keyword>
<accession>A4W0D4</accession>
<proteinExistence type="inferred from homology"/>
<protein>
    <recommendedName>
        <fullName evidence="1">Phosphoserine aminotransferase</fullName>
        <ecNumber evidence="1">2.6.1.52</ecNumber>
    </recommendedName>
    <alternativeName>
        <fullName evidence="1">Phosphohydroxythreonine aminotransferase</fullName>
        <shortName evidence="1">PSAT</shortName>
    </alternativeName>
</protein>
<organism>
    <name type="scientific">Streptococcus suis (strain 98HAH33)</name>
    <dbReference type="NCBI Taxonomy" id="391296"/>
    <lineage>
        <taxon>Bacteria</taxon>
        <taxon>Bacillati</taxon>
        <taxon>Bacillota</taxon>
        <taxon>Bacilli</taxon>
        <taxon>Lactobacillales</taxon>
        <taxon>Streptococcaceae</taxon>
        <taxon>Streptococcus</taxon>
    </lineage>
</organism>
<sequence length="363" mass="40290">MTIYNFSAGPAVLPKPVLERAQAEFLDYNGSGMSVLEMSHRSKDFDDIIKGAEATLRELMAIPDNYKVIFLQGGASLEFTMIPLNFAQGKKAYYLVGGSWGKKAYTEAVKLSKTIAFEPILLGSTEDITYAELPTFDKNDIDPTAAYVHLTTNNTIEGTAVYDIPDTNGVPVIADMSSNILAARYNVEDFAMIYAGAQKNIGPAGVTVVIVREDFLNDQPMLSSMLDYRIQAENDSLYNTPPAYSIYISKLVFEWVKEIGGVDEMEKINREKSGLLYDYIDQSNFYTNPVRKKEERSVANIPFVSPSEELDAKFVKEATAAGFKNIKGHRSVGGMRASLYNAFPRQGVVELIEFMKKFAVENA</sequence>
<gene>
    <name evidence="1" type="primary">serC</name>
    <name type="ordered locus">SSU98_0665</name>
</gene>
<dbReference type="EC" id="2.6.1.52" evidence="1"/>
<dbReference type="EMBL" id="CP000408">
    <property type="protein sequence ID" value="ABP91823.1"/>
    <property type="molecule type" value="Genomic_DNA"/>
</dbReference>
<dbReference type="SMR" id="A4W0D4"/>
<dbReference type="KEGG" id="ssv:SSU98_0665"/>
<dbReference type="HOGENOM" id="CLU_034866_0_2_9"/>
<dbReference type="UniPathway" id="UPA00135">
    <property type="reaction ID" value="UER00197"/>
</dbReference>
<dbReference type="GO" id="GO:0005737">
    <property type="term" value="C:cytoplasm"/>
    <property type="evidence" value="ECO:0007669"/>
    <property type="project" value="UniProtKB-SubCell"/>
</dbReference>
<dbReference type="GO" id="GO:0004648">
    <property type="term" value="F:O-phospho-L-serine:2-oxoglutarate aminotransferase activity"/>
    <property type="evidence" value="ECO:0007669"/>
    <property type="project" value="UniProtKB-UniRule"/>
</dbReference>
<dbReference type="GO" id="GO:0030170">
    <property type="term" value="F:pyridoxal phosphate binding"/>
    <property type="evidence" value="ECO:0007669"/>
    <property type="project" value="UniProtKB-UniRule"/>
</dbReference>
<dbReference type="GO" id="GO:0006564">
    <property type="term" value="P:L-serine biosynthetic process"/>
    <property type="evidence" value="ECO:0007669"/>
    <property type="project" value="UniProtKB-UniRule"/>
</dbReference>
<dbReference type="FunFam" id="3.40.640.10:FF:000010">
    <property type="entry name" value="Phosphoserine aminotransferase"/>
    <property type="match status" value="1"/>
</dbReference>
<dbReference type="FunFam" id="3.90.1150.10:FF:000006">
    <property type="entry name" value="Phosphoserine aminotransferase"/>
    <property type="match status" value="1"/>
</dbReference>
<dbReference type="Gene3D" id="3.90.1150.10">
    <property type="entry name" value="Aspartate Aminotransferase, domain 1"/>
    <property type="match status" value="1"/>
</dbReference>
<dbReference type="Gene3D" id="3.40.640.10">
    <property type="entry name" value="Type I PLP-dependent aspartate aminotransferase-like (Major domain)"/>
    <property type="match status" value="1"/>
</dbReference>
<dbReference type="HAMAP" id="MF_00160">
    <property type="entry name" value="SerC_aminotrans_5"/>
    <property type="match status" value="1"/>
</dbReference>
<dbReference type="InterPro" id="IPR000192">
    <property type="entry name" value="Aminotrans_V_dom"/>
</dbReference>
<dbReference type="InterPro" id="IPR022278">
    <property type="entry name" value="Pser_aminoTfrase"/>
</dbReference>
<dbReference type="InterPro" id="IPR015424">
    <property type="entry name" value="PyrdxlP-dep_Trfase"/>
</dbReference>
<dbReference type="InterPro" id="IPR015421">
    <property type="entry name" value="PyrdxlP-dep_Trfase_major"/>
</dbReference>
<dbReference type="InterPro" id="IPR015422">
    <property type="entry name" value="PyrdxlP-dep_Trfase_small"/>
</dbReference>
<dbReference type="NCBIfam" id="NF003764">
    <property type="entry name" value="PRK05355.1"/>
    <property type="match status" value="1"/>
</dbReference>
<dbReference type="NCBIfam" id="TIGR01364">
    <property type="entry name" value="serC_1"/>
    <property type="match status" value="1"/>
</dbReference>
<dbReference type="PANTHER" id="PTHR43247">
    <property type="entry name" value="PHOSPHOSERINE AMINOTRANSFERASE"/>
    <property type="match status" value="1"/>
</dbReference>
<dbReference type="PANTHER" id="PTHR43247:SF1">
    <property type="entry name" value="PHOSPHOSERINE AMINOTRANSFERASE"/>
    <property type="match status" value="1"/>
</dbReference>
<dbReference type="Pfam" id="PF00266">
    <property type="entry name" value="Aminotran_5"/>
    <property type="match status" value="1"/>
</dbReference>
<dbReference type="PIRSF" id="PIRSF000525">
    <property type="entry name" value="SerC"/>
    <property type="match status" value="1"/>
</dbReference>
<dbReference type="SUPFAM" id="SSF53383">
    <property type="entry name" value="PLP-dependent transferases"/>
    <property type="match status" value="1"/>
</dbReference>
<comment type="function">
    <text evidence="1">Catalyzes the reversible conversion of 3-phosphohydroxypyruvate to phosphoserine and of 3-hydroxy-2-oxo-4-phosphonooxybutanoate to phosphohydroxythreonine.</text>
</comment>
<comment type="catalytic activity">
    <reaction evidence="1">
        <text>O-phospho-L-serine + 2-oxoglutarate = 3-phosphooxypyruvate + L-glutamate</text>
        <dbReference type="Rhea" id="RHEA:14329"/>
        <dbReference type="ChEBI" id="CHEBI:16810"/>
        <dbReference type="ChEBI" id="CHEBI:18110"/>
        <dbReference type="ChEBI" id="CHEBI:29985"/>
        <dbReference type="ChEBI" id="CHEBI:57524"/>
        <dbReference type="EC" id="2.6.1.52"/>
    </reaction>
</comment>
<comment type="catalytic activity">
    <reaction evidence="1">
        <text>4-(phosphooxy)-L-threonine + 2-oxoglutarate = (R)-3-hydroxy-2-oxo-4-phosphooxybutanoate + L-glutamate</text>
        <dbReference type="Rhea" id="RHEA:16573"/>
        <dbReference type="ChEBI" id="CHEBI:16810"/>
        <dbReference type="ChEBI" id="CHEBI:29985"/>
        <dbReference type="ChEBI" id="CHEBI:58452"/>
        <dbReference type="ChEBI" id="CHEBI:58538"/>
        <dbReference type="EC" id="2.6.1.52"/>
    </reaction>
</comment>
<comment type="cofactor">
    <cofactor evidence="1">
        <name>pyridoxal 5'-phosphate</name>
        <dbReference type="ChEBI" id="CHEBI:597326"/>
    </cofactor>
    <text evidence="1">Binds 1 pyridoxal phosphate per subunit.</text>
</comment>
<comment type="pathway">
    <text evidence="1">Amino-acid biosynthesis; L-serine biosynthesis; L-serine from 3-phospho-D-glycerate: step 2/3.</text>
</comment>
<comment type="subunit">
    <text evidence="1">Homodimer.</text>
</comment>
<comment type="subcellular location">
    <subcellularLocation>
        <location evidence="1">Cytoplasm</location>
    </subcellularLocation>
</comment>
<comment type="similarity">
    <text evidence="1">Belongs to the class-V pyridoxal-phosphate-dependent aminotransferase family. SerC subfamily.</text>
</comment>
<evidence type="ECO:0000255" key="1">
    <source>
        <dbReference type="HAMAP-Rule" id="MF_00160"/>
    </source>
</evidence>
<feature type="chain" id="PRO_1000058223" description="Phosphoserine aminotransferase">
    <location>
        <begin position="1"/>
        <end position="363"/>
    </location>
</feature>
<feature type="binding site" evidence="1">
    <location>
        <position position="41"/>
    </location>
    <ligand>
        <name>L-glutamate</name>
        <dbReference type="ChEBI" id="CHEBI:29985"/>
    </ligand>
</feature>
<feature type="binding site" evidence="1">
    <location>
        <begin position="75"/>
        <end position="76"/>
    </location>
    <ligand>
        <name>pyridoxal 5'-phosphate</name>
        <dbReference type="ChEBI" id="CHEBI:597326"/>
    </ligand>
</feature>
<feature type="binding site" evidence="1">
    <location>
        <position position="100"/>
    </location>
    <ligand>
        <name>pyridoxal 5'-phosphate</name>
        <dbReference type="ChEBI" id="CHEBI:597326"/>
    </ligand>
</feature>
<feature type="binding site" evidence="1">
    <location>
        <position position="155"/>
    </location>
    <ligand>
        <name>pyridoxal 5'-phosphate</name>
        <dbReference type="ChEBI" id="CHEBI:597326"/>
    </ligand>
</feature>
<feature type="binding site" evidence="1">
    <location>
        <position position="175"/>
    </location>
    <ligand>
        <name>pyridoxal 5'-phosphate</name>
        <dbReference type="ChEBI" id="CHEBI:597326"/>
    </ligand>
</feature>
<feature type="binding site" evidence="1">
    <location>
        <position position="198"/>
    </location>
    <ligand>
        <name>pyridoxal 5'-phosphate</name>
        <dbReference type="ChEBI" id="CHEBI:597326"/>
    </ligand>
</feature>
<feature type="binding site" evidence="1">
    <location>
        <begin position="239"/>
        <end position="240"/>
    </location>
    <ligand>
        <name>pyridoxal 5'-phosphate</name>
        <dbReference type="ChEBI" id="CHEBI:597326"/>
    </ligand>
</feature>
<feature type="modified residue" description="N6-(pyridoxal phosphate)lysine" evidence="1">
    <location>
        <position position="199"/>
    </location>
</feature>
<reference key="1">
    <citation type="journal article" date="2007" name="PLoS ONE">
        <title>A glimpse of streptococcal toxic shock syndrome from comparative genomics of S. suis 2 Chinese isolates.</title>
        <authorList>
            <person name="Chen C."/>
            <person name="Tang J."/>
            <person name="Dong W."/>
            <person name="Wang C."/>
            <person name="Feng Y."/>
            <person name="Wang J."/>
            <person name="Zheng F."/>
            <person name="Pan X."/>
            <person name="Liu D."/>
            <person name="Li M."/>
            <person name="Song Y."/>
            <person name="Zhu X."/>
            <person name="Sun H."/>
            <person name="Feng T."/>
            <person name="Guo Z."/>
            <person name="Ju A."/>
            <person name="Ge J."/>
            <person name="Dong Y."/>
            <person name="Sun W."/>
            <person name="Jiang Y."/>
            <person name="Wang J."/>
            <person name="Yan J."/>
            <person name="Yang H."/>
            <person name="Wang X."/>
            <person name="Gao G.F."/>
            <person name="Yang R."/>
            <person name="Wang J."/>
            <person name="Yu J."/>
        </authorList>
    </citation>
    <scope>NUCLEOTIDE SEQUENCE [LARGE SCALE GENOMIC DNA]</scope>
    <source>
        <strain>98HAH33</strain>
    </source>
</reference>
<name>SERC_STRS2</name>